<protein>
    <recommendedName>
        <fullName evidence="1">Phosphoribosylglycinamide formyltransferase</fullName>
        <ecNumber evidence="1">2.1.2.2</ecNumber>
    </recommendedName>
    <alternativeName>
        <fullName evidence="1">5'-phosphoribosylglycinamide transformylase</fullName>
    </alternativeName>
    <alternativeName>
        <fullName evidence="1">GAR transformylase</fullName>
        <shortName evidence="1">GART</shortName>
    </alternativeName>
</protein>
<feature type="chain" id="PRO_0000074951" description="Phosphoribosylglycinamide formyltransferase">
    <location>
        <begin position="1"/>
        <end position="188"/>
    </location>
</feature>
<feature type="active site" description="Proton donor" evidence="1">
    <location>
        <position position="110"/>
    </location>
</feature>
<feature type="binding site" evidence="1">
    <location>
        <begin position="12"/>
        <end position="14"/>
    </location>
    <ligand>
        <name>N(1)-(5-phospho-beta-D-ribosyl)glycinamide</name>
        <dbReference type="ChEBI" id="CHEBI:143788"/>
    </ligand>
</feature>
<feature type="binding site" evidence="1">
    <location>
        <position position="66"/>
    </location>
    <ligand>
        <name>(6R)-10-formyltetrahydrofolate</name>
        <dbReference type="ChEBI" id="CHEBI:195366"/>
    </ligand>
</feature>
<feature type="binding site" evidence="1">
    <location>
        <begin position="91"/>
        <end position="94"/>
    </location>
    <ligand>
        <name>(6R)-10-formyltetrahydrofolate</name>
        <dbReference type="ChEBI" id="CHEBI:195366"/>
    </ligand>
</feature>
<feature type="binding site" evidence="1">
    <location>
        <position position="108"/>
    </location>
    <ligand>
        <name>(6R)-10-formyltetrahydrofolate</name>
        <dbReference type="ChEBI" id="CHEBI:195366"/>
    </ligand>
</feature>
<feature type="site" description="Raises pKa of active site His" evidence="1">
    <location>
        <position position="146"/>
    </location>
</feature>
<organism>
    <name type="scientific">Staphylococcus epidermidis (strain ATCC 12228 / FDA PCI 1200)</name>
    <dbReference type="NCBI Taxonomy" id="176280"/>
    <lineage>
        <taxon>Bacteria</taxon>
        <taxon>Bacillati</taxon>
        <taxon>Bacillota</taxon>
        <taxon>Bacilli</taxon>
        <taxon>Bacillales</taxon>
        <taxon>Staphylococcaceae</taxon>
        <taxon>Staphylococcus</taxon>
    </lineage>
</organism>
<gene>
    <name evidence="1" type="primary">purN</name>
    <name type="ordered locus">SE_0770</name>
</gene>
<evidence type="ECO:0000255" key="1">
    <source>
        <dbReference type="HAMAP-Rule" id="MF_01930"/>
    </source>
</evidence>
<sequence length="188" mass="20965">MTNIAIFASGSGSNFENIVKHIQTGQLSGINVTALYTDNEGVPCIDRAKNLNIPIHINKPKDFSSKSLYEQHLLKLLSSEEVQWIVLAGYMRLVGQDLLQAYEGRILNIHPSLLPKFKGLDAIGQALESGDTVTGSTVHYVDSGMDTGEIIEQQQCDIKPDDTKEQLEDRVKHLEYELYPRVIAKIIK</sequence>
<accession>Q8CT28</accession>
<dbReference type="EC" id="2.1.2.2" evidence="1"/>
<dbReference type="EMBL" id="AE015929">
    <property type="protein sequence ID" value="AAO04367.1"/>
    <property type="molecule type" value="Genomic_DNA"/>
</dbReference>
<dbReference type="RefSeq" id="NP_764325.1">
    <property type="nucleotide sequence ID" value="NC_004461.1"/>
</dbReference>
<dbReference type="RefSeq" id="WP_001831672.1">
    <property type="nucleotide sequence ID" value="NZ_WBME01000028.1"/>
</dbReference>
<dbReference type="SMR" id="Q8CT28"/>
<dbReference type="GeneID" id="50019090"/>
<dbReference type="KEGG" id="sep:SE_0770"/>
<dbReference type="PATRIC" id="fig|176280.10.peg.742"/>
<dbReference type="eggNOG" id="COG0299">
    <property type="taxonomic scope" value="Bacteria"/>
</dbReference>
<dbReference type="HOGENOM" id="CLU_038395_1_3_9"/>
<dbReference type="OrthoDB" id="9806170at2"/>
<dbReference type="UniPathway" id="UPA00074">
    <property type="reaction ID" value="UER00126"/>
</dbReference>
<dbReference type="Proteomes" id="UP000001411">
    <property type="component" value="Chromosome"/>
</dbReference>
<dbReference type="GO" id="GO:0005829">
    <property type="term" value="C:cytosol"/>
    <property type="evidence" value="ECO:0007669"/>
    <property type="project" value="TreeGrafter"/>
</dbReference>
<dbReference type="GO" id="GO:0004644">
    <property type="term" value="F:phosphoribosylglycinamide formyltransferase activity"/>
    <property type="evidence" value="ECO:0007669"/>
    <property type="project" value="UniProtKB-UniRule"/>
</dbReference>
<dbReference type="GO" id="GO:0006189">
    <property type="term" value="P:'de novo' IMP biosynthetic process"/>
    <property type="evidence" value="ECO:0007669"/>
    <property type="project" value="UniProtKB-UniRule"/>
</dbReference>
<dbReference type="CDD" id="cd08645">
    <property type="entry name" value="FMT_core_GART"/>
    <property type="match status" value="1"/>
</dbReference>
<dbReference type="Gene3D" id="3.40.50.170">
    <property type="entry name" value="Formyl transferase, N-terminal domain"/>
    <property type="match status" value="1"/>
</dbReference>
<dbReference type="HAMAP" id="MF_01930">
    <property type="entry name" value="PurN"/>
    <property type="match status" value="1"/>
</dbReference>
<dbReference type="InterPro" id="IPR002376">
    <property type="entry name" value="Formyl_transf_N"/>
</dbReference>
<dbReference type="InterPro" id="IPR036477">
    <property type="entry name" value="Formyl_transf_N_sf"/>
</dbReference>
<dbReference type="InterPro" id="IPR004607">
    <property type="entry name" value="GART"/>
</dbReference>
<dbReference type="NCBIfam" id="TIGR00639">
    <property type="entry name" value="PurN"/>
    <property type="match status" value="1"/>
</dbReference>
<dbReference type="PANTHER" id="PTHR43369">
    <property type="entry name" value="PHOSPHORIBOSYLGLYCINAMIDE FORMYLTRANSFERASE"/>
    <property type="match status" value="1"/>
</dbReference>
<dbReference type="PANTHER" id="PTHR43369:SF2">
    <property type="entry name" value="PHOSPHORIBOSYLGLYCINAMIDE FORMYLTRANSFERASE"/>
    <property type="match status" value="1"/>
</dbReference>
<dbReference type="Pfam" id="PF00551">
    <property type="entry name" value="Formyl_trans_N"/>
    <property type="match status" value="1"/>
</dbReference>
<dbReference type="SUPFAM" id="SSF53328">
    <property type="entry name" value="Formyltransferase"/>
    <property type="match status" value="1"/>
</dbReference>
<keyword id="KW-0658">Purine biosynthesis</keyword>
<keyword id="KW-0808">Transferase</keyword>
<reference key="1">
    <citation type="journal article" date="2003" name="Mol. Microbiol.">
        <title>Genome-based analysis of virulence genes in a non-biofilm-forming Staphylococcus epidermidis strain (ATCC 12228).</title>
        <authorList>
            <person name="Zhang Y.-Q."/>
            <person name="Ren S.-X."/>
            <person name="Li H.-L."/>
            <person name="Wang Y.-X."/>
            <person name="Fu G."/>
            <person name="Yang J."/>
            <person name="Qin Z.-Q."/>
            <person name="Miao Y.-G."/>
            <person name="Wang W.-Y."/>
            <person name="Chen R.-S."/>
            <person name="Shen Y."/>
            <person name="Chen Z."/>
            <person name="Yuan Z.-H."/>
            <person name="Zhao G.-P."/>
            <person name="Qu D."/>
            <person name="Danchin A."/>
            <person name="Wen Y.-M."/>
        </authorList>
    </citation>
    <scope>NUCLEOTIDE SEQUENCE [LARGE SCALE GENOMIC DNA]</scope>
    <source>
        <strain>ATCC 12228 / FDA PCI 1200</strain>
    </source>
</reference>
<proteinExistence type="inferred from homology"/>
<comment type="function">
    <text evidence="1">Catalyzes the transfer of a formyl group from 10-formyltetrahydrofolate to 5-phospho-ribosyl-glycinamide (GAR), producing 5-phospho-ribosyl-N-formylglycinamide (FGAR) and tetrahydrofolate.</text>
</comment>
<comment type="catalytic activity">
    <reaction evidence="1">
        <text>N(1)-(5-phospho-beta-D-ribosyl)glycinamide + (6R)-10-formyltetrahydrofolate = N(2)-formyl-N(1)-(5-phospho-beta-D-ribosyl)glycinamide + (6S)-5,6,7,8-tetrahydrofolate + H(+)</text>
        <dbReference type="Rhea" id="RHEA:15053"/>
        <dbReference type="ChEBI" id="CHEBI:15378"/>
        <dbReference type="ChEBI" id="CHEBI:57453"/>
        <dbReference type="ChEBI" id="CHEBI:143788"/>
        <dbReference type="ChEBI" id="CHEBI:147286"/>
        <dbReference type="ChEBI" id="CHEBI:195366"/>
        <dbReference type="EC" id="2.1.2.2"/>
    </reaction>
</comment>
<comment type="pathway">
    <text evidence="1">Purine metabolism; IMP biosynthesis via de novo pathway; N(2)-formyl-N(1)-(5-phospho-D-ribosyl)glycinamide from N(1)-(5-phospho-D-ribosyl)glycinamide (10-formyl THF route): step 1/1.</text>
</comment>
<comment type="similarity">
    <text evidence="1">Belongs to the GART family.</text>
</comment>
<name>PUR3_STAES</name>